<sequence length="272" mass="29305">MLLAIDVRNTHTVVGLLSGMKEHAKVVQQWRIRTESEVTADELALTIDGLIGEDSERLTGTAALSTVPSVLHEVRIMLDQYWPSVPHVLIEPGVRTGIPLLVDNPKEVGADRIVNCLAAYDRFRKAAIVVDFGSSICVDVVSAKGEFLGGAIAPGVQVSSDAAAARSAALRRVELARPRSVVGKNTVECMQAGAVFGFAGLVDGLVGRIREDVSGFSVDHDVAIVATGHTAPLLLPELHTVDHYDQHLTLQGLRLVFERNLEVQRGRLKTAR</sequence>
<protein>
    <recommendedName>
        <fullName evidence="1">Type III pantothenate kinase</fullName>
        <ecNumber evidence="1">2.7.1.33</ecNumber>
    </recommendedName>
    <alternativeName>
        <fullName evidence="1">PanK-III</fullName>
    </alternativeName>
    <alternativeName>
        <fullName evidence="1">Pantothenic acid kinase</fullName>
    </alternativeName>
</protein>
<name>COAX_MYCTU</name>
<reference key="1">
    <citation type="journal article" date="1998" name="Nature">
        <title>Deciphering the biology of Mycobacterium tuberculosis from the complete genome sequence.</title>
        <authorList>
            <person name="Cole S.T."/>
            <person name="Brosch R."/>
            <person name="Parkhill J."/>
            <person name="Garnier T."/>
            <person name="Churcher C.M."/>
            <person name="Harris D.E."/>
            <person name="Gordon S.V."/>
            <person name="Eiglmeier K."/>
            <person name="Gas S."/>
            <person name="Barry C.E. III"/>
            <person name="Tekaia F."/>
            <person name="Badcock K."/>
            <person name="Basham D."/>
            <person name="Brown D."/>
            <person name="Chillingworth T."/>
            <person name="Connor R."/>
            <person name="Davies R.M."/>
            <person name="Devlin K."/>
            <person name="Feltwell T."/>
            <person name="Gentles S."/>
            <person name="Hamlin N."/>
            <person name="Holroyd S."/>
            <person name="Hornsby T."/>
            <person name="Jagels K."/>
            <person name="Krogh A."/>
            <person name="McLean J."/>
            <person name="Moule S."/>
            <person name="Murphy L.D."/>
            <person name="Oliver S."/>
            <person name="Osborne J."/>
            <person name="Quail M.A."/>
            <person name="Rajandream M.A."/>
            <person name="Rogers J."/>
            <person name="Rutter S."/>
            <person name="Seeger K."/>
            <person name="Skelton S."/>
            <person name="Squares S."/>
            <person name="Squares R."/>
            <person name="Sulston J.E."/>
            <person name="Taylor K."/>
            <person name="Whitehead S."/>
            <person name="Barrell B.G."/>
        </authorList>
    </citation>
    <scope>NUCLEOTIDE SEQUENCE [LARGE SCALE GENOMIC DNA]</scope>
    <source>
        <strain>ATCC 25618 / H37Rv</strain>
    </source>
</reference>
<reference key="2">
    <citation type="journal article" date="2011" name="Mol. Cell. Proteomics">
        <title>Proteogenomic analysis of Mycobacterium tuberculosis by high resolution mass spectrometry.</title>
        <authorList>
            <person name="Kelkar D.S."/>
            <person name="Kumar D."/>
            <person name="Kumar P."/>
            <person name="Balakrishnan L."/>
            <person name="Muthusamy B."/>
            <person name="Yadav A.K."/>
            <person name="Shrivastava P."/>
            <person name="Marimuthu A."/>
            <person name="Anand S."/>
            <person name="Sundaram H."/>
            <person name="Kingsbury R."/>
            <person name="Harsha H.C."/>
            <person name="Nair B."/>
            <person name="Prasad T.S."/>
            <person name="Chauhan D.S."/>
            <person name="Katoch K."/>
            <person name="Katoch V.M."/>
            <person name="Kumar P."/>
            <person name="Chaerkady R."/>
            <person name="Ramachandran S."/>
            <person name="Dash D."/>
            <person name="Pandey A."/>
        </authorList>
    </citation>
    <scope>IDENTIFICATION BY MASS SPECTROMETRY [LARGE SCALE ANALYSIS]</scope>
    <source>
        <strain>ATCC 25618 / H37Rv</strain>
    </source>
</reference>
<evidence type="ECO:0000255" key="1">
    <source>
        <dbReference type="HAMAP-Rule" id="MF_01274"/>
    </source>
</evidence>
<evidence type="ECO:0007829" key="2">
    <source>
        <dbReference type="PDB" id="9B78"/>
    </source>
</evidence>
<evidence type="ECO:0007829" key="3">
    <source>
        <dbReference type="PDB" id="9B79"/>
    </source>
</evidence>
<evidence type="ECO:0007829" key="4">
    <source>
        <dbReference type="PDB" id="9CKU"/>
    </source>
</evidence>
<feature type="chain" id="PRO_0000267566" description="Type III pantothenate kinase">
    <location>
        <begin position="1"/>
        <end position="272"/>
    </location>
</feature>
<feature type="active site" description="Proton acceptor" evidence="1">
    <location>
        <position position="111"/>
    </location>
</feature>
<feature type="binding site" evidence="1">
    <location>
        <begin position="6"/>
        <end position="13"/>
    </location>
    <ligand>
        <name>ATP</name>
        <dbReference type="ChEBI" id="CHEBI:30616"/>
    </ligand>
</feature>
<feature type="binding site" evidence="1">
    <location>
        <begin position="109"/>
        <end position="112"/>
    </location>
    <ligand>
        <name>substrate</name>
    </ligand>
</feature>
<feature type="binding site" evidence="1">
    <location>
        <position position="131"/>
    </location>
    <ligand>
        <name>K(+)</name>
        <dbReference type="ChEBI" id="CHEBI:29103"/>
    </ligand>
</feature>
<feature type="binding site" evidence="1">
    <location>
        <position position="134"/>
    </location>
    <ligand>
        <name>ATP</name>
        <dbReference type="ChEBI" id="CHEBI:30616"/>
    </ligand>
</feature>
<feature type="binding site" evidence="1">
    <location>
        <position position="186"/>
    </location>
    <ligand>
        <name>substrate</name>
    </ligand>
</feature>
<feature type="strand" evidence="4">
    <location>
        <begin position="2"/>
        <end position="7"/>
    </location>
</feature>
<feature type="strand" evidence="4">
    <location>
        <begin position="9"/>
        <end position="19"/>
    </location>
</feature>
<feature type="helix" evidence="4">
    <location>
        <begin position="21"/>
        <end position="23"/>
    </location>
</feature>
<feature type="strand" evidence="4">
    <location>
        <begin position="25"/>
        <end position="33"/>
    </location>
</feature>
<feature type="helix" evidence="4">
    <location>
        <begin position="40"/>
        <end position="51"/>
    </location>
</feature>
<feature type="helix" evidence="4">
    <location>
        <begin position="52"/>
        <end position="57"/>
    </location>
</feature>
<feature type="strand" evidence="4">
    <location>
        <begin position="60"/>
        <end position="67"/>
    </location>
</feature>
<feature type="helix" evidence="4">
    <location>
        <begin position="68"/>
        <end position="81"/>
    </location>
</feature>
<feature type="strand" evidence="3">
    <location>
        <begin position="83"/>
        <end position="85"/>
    </location>
</feature>
<feature type="strand" evidence="4">
    <location>
        <begin position="87"/>
        <end position="90"/>
    </location>
</feature>
<feature type="strand" evidence="4">
    <location>
        <begin position="96"/>
        <end position="98"/>
    </location>
</feature>
<feature type="helix" evidence="4">
    <location>
        <begin position="105"/>
        <end position="107"/>
    </location>
</feature>
<feature type="helix" evidence="4">
    <location>
        <begin position="110"/>
        <end position="123"/>
    </location>
</feature>
<feature type="strand" evidence="4">
    <location>
        <begin position="127"/>
        <end position="141"/>
    </location>
</feature>
<feature type="strand" evidence="3">
    <location>
        <begin position="143"/>
        <end position="145"/>
    </location>
</feature>
<feature type="strand" evidence="4">
    <location>
        <begin position="147"/>
        <end position="154"/>
    </location>
</feature>
<feature type="helix" evidence="4">
    <location>
        <begin position="160"/>
        <end position="166"/>
    </location>
</feature>
<feature type="strand" evidence="4">
    <location>
        <begin position="181"/>
        <end position="185"/>
    </location>
</feature>
<feature type="helix" evidence="4">
    <location>
        <begin position="186"/>
        <end position="212"/>
    </location>
</feature>
<feature type="strand" evidence="2">
    <location>
        <begin position="217"/>
        <end position="220"/>
    </location>
</feature>
<feature type="strand" evidence="4">
    <location>
        <begin position="223"/>
        <end position="228"/>
    </location>
</feature>
<feature type="helix" evidence="4">
    <location>
        <begin position="231"/>
        <end position="234"/>
    </location>
</feature>
<feature type="helix" evidence="4">
    <location>
        <begin position="235"/>
        <end position="237"/>
    </location>
</feature>
<feature type="helix" evidence="4">
    <location>
        <begin position="248"/>
        <end position="260"/>
    </location>
</feature>
<comment type="function">
    <text evidence="1">Catalyzes the phosphorylation of pantothenate (Pan), the first step in CoA biosynthesis.</text>
</comment>
<comment type="catalytic activity">
    <reaction evidence="1">
        <text>(R)-pantothenate + ATP = (R)-4'-phosphopantothenate + ADP + H(+)</text>
        <dbReference type="Rhea" id="RHEA:16373"/>
        <dbReference type="ChEBI" id="CHEBI:10986"/>
        <dbReference type="ChEBI" id="CHEBI:15378"/>
        <dbReference type="ChEBI" id="CHEBI:29032"/>
        <dbReference type="ChEBI" id="CHEBI:30616"/>
        <dbReference type="ChEBI" id="CHEBI:456216"/>
        <dbReference type="EC" id="2.7.1.33"/>
    </reaction>
</comment>
<comment type="cofactor">
    <cofactor evidence="1">
        <name>NH4(+)</name>
        <dbReference type="ChEBI" id="CHEBI:28938"/>
    </cofactor>
    <cofactor evidence="1">
        <name>K(+)</name>
        <dbReference type="ChEBI" id="CHEBI:29103"/>
    </cofactor>
    <text evidence="1">A monovalent cation. Ammonium or potassium.</text>
</comment>
<comment type="pathway">
    <text evidence="1">Cofactor biosynthesis; coenzyme A biosynthesis; CoA from (R)-pantothenate: step 1/5.</text>
</comment>
<comment type="subunit">
    <text evidence="1">Homodimer.</text>
</comment>
<comment type="subcellular location">
    <subcellularLocation>
        <location evidence="1">Cytoplasm</location>
    </subcellularLocation>
</comment>
<comment type="similarity">
    <text evidence="1">Belongs to the type III pantothenate kinase family.</text>
</comment>
<dbReference type="EC" id="2.7.1.33" evidence="1"/>
<dbReference type="EMBL" id="AL123456">
    <property type="protein sequence ID" value="CCP46423.1"/>
    <property type="molecule type" value="Genomic_DNA"/>
</dbReference>
<dbReference type="PIR" id="A70955">
    <property type="entry name" value="A70955"/>
</dbReference>
<dbReference type="RefSeq" id="NP_218117.1">
    <property type="nucleotide sequence ID" value="NC_000962.3"/>
</dbReference>
<dbReference type="RefSeq" id="WP_003419517.1">
    <property type="nucleotide sequence ID" value="NZ_NVQJ01000056.1"/>
</dbReference>
<dbReference type="PDB" id="9B78">
    <property type="method" value="EM"/>
    <property type="resolution" value="2.59 A"/>
    <property type="chains" value="A/B/C/D/E/F=1-272"/>
</dbReference>
<dbReference type="PDB" id="9B79">
    <property type="method" value="EM"/>
    <property type="resolution" value="2.71 A"/>
    <property type="chains" value="A/B/C/D=1-272"/>
</dbReference>
<dbReference type="PDB" id="9CKU">
    <property type="method" value="EM"/>
    <property type="resolution" value="2.04 A"/>
    <property type="chains" value="A/B/C/D/E/F=1-272"/>
</dbReference>
<dbReference type="PDBsum" id="9B78"/>
<dbReference type="PDBsum" id="9B79"/>
<dbReference type="PDBsum" id="9CKU"/>
<dbReference type="SMR" id="P9WPA1"/>
<dbReference type="FunCoup" id="P9WPA1">
    <property type="interactions" value="171"/>
</dbReference>
<dbReference type="STRING" id="83332.Rv3600c"/>
<dbReference type="PaxDb" id="83332-Rv3600c"/>
<dbReference type="DNASU" id="885572"/>
<dbReference type="GeneID" id="885572"/>
<dbReference type="KEGG" id="mtu:Rv3600c"/>
<dbReference type="KEGG" id="mtv:RVBD_3600c"/>
<dbReference type="TubercuList" id="Rv3600c"/>
<dbReference type="eggNOG" id="COG1521">
    <property type="taxonomic scope" value="Bacteria"/>
</dbReference>
<dbReference type="InParanoid" id="P9WPA1"/>
<dbReference type="OrthoDB" id="9804707at2"/>
<dbReference type="PhylomeDB" id="P9WPA1"/>
<dbReference type="BRENDA" id="2.7.1.33">
    <property type="organism ID" value="3445"/>
</dbReference>
<dbReference type="UniPathway" id="UPA00241">
    <property type="reaction ID" value="UER00352"/>
</dbReference>
<dbReference type="Proteomes" id="UP000001584">
    <property type="component" value="Chromosome"/>
</dbReference>
<dbReference type="GO" id="GO:0005737">
    <property type="term" value="C:cytoplasm"/>
    <property type="evidence" value="ECO:0007669"/>
    <property type="project" value="UniProtKB-SubCell"/>
</dbReference>
<dbReference type="GO" id="GO:0005886">
    <property type="term" value="C:plasma membrane"/>
    <property type="evidence" value="ECO:0007005"/>
    <property type="project" value="MTBBASE"/>
</dbReference>
<dbReference type="GO" id="GO:0005524">
    <property type="term" value="F:ATP binding"/>
    <property type="evidence" value="ECO:0007669"/>
    <property type="project" value="UniProtKB-UniRule"/>
</dbReference>
<dbReference type="GO" id="GO:0016301">
    <property type="term" value="F:kinase activity"/>
    <property type="evidence" value="ECO:0007669"/>
    <property type="project" value="UniProtKB-KW"/>
</dbReference>
<dbReference type="GO" id="GO:0046872">
    <property type="term" value="F:metal ion binding"/>
    <property type="evidence" value="ECO:0007669"/>
    <property type="project" value="UniProtKB-KW"/>
</dbReference>
<dbReference type="GO" id="GO:0015937">
    <property type="term" value="P:coenzyme A biosynthetic process"/>
    <property type="evidence" value="ECO:0007669"/>
    <property type="project" value="UniProtKB-UniRule"/>
</dbReference>
<dbReference type="CDD" id="cd24015">
    <property type="entry name" value="ASKHA_NBD_PanK-III"/>
    <property type="match status" value="1"/>
</dbReference>
<dbReference type="FunFam" id="3.30.420.40:FF:000146">
    <property type="entry name" value="Type III pantothenate kinase"/>
    <property type="match status" value="1"/>
</dbReference>
<dbReference type="FunFam" id="3.30.420.40:FF:000223">
    <property type="entry name" value="Type III pantothenate kinase"/>
    <property type="match status" value="1"/>
</dbReference>
<dbReference type="Gene3D" id="3.30.420.40">
    <property type="match status" value="2"/>
</dbReference>
<dbReference type="HAMAP" id="MF_01274">
    <property type="entry name" value="Pantothen_kinase_3"/>
    <property type="match status" value="1"/>
</dbReference>
<dbReference type="InterPro" id="IPR043129">
    <property type="entry name" value="ATPase_NBD"/>
</dbReference>
<dbReference type="InterPro" id="IPR004619">
    <property type="entry name" value="Type_III_PanK"/>
</dbReference>
<dbReference type="NCBIfam" id="TIGR00671">
    <property type="entry name" value="baf"/>
    <property type="match status" value="1"/>
</dbReference>
<dbReference type="NCBIfam" id="NF009845">
    <property type="entry name" value="PRK13318.1-3"/>
    <property type="match status" value="1"/>
</dbReference>
<dbReference type="PANTHER" id="PTHR34265">
    <property type="entry name" value="TYPE III PANTOTHENATE KINASE"/>
    <property type="match status" value="1"/>
</dbReference>
<dbReference type="PANTHER" id="PTHR34265:SF1">
    <property type="entry name" value="TYPE III PANTOTHENATE KINASE"/>
    <property type="match status" value="1"/>
</dbReference>
<dbReference type="Pfam" id="PF03309">
    <property type="entry name" value="Pan_kinase"/>
    <property type="match status" value="1"/>
</dbReference>
<dbReference type="SUPFAM" id="SSF53067">
    <property type="entry name" value="Actin-like ATPase domain"/>
    <property type="match status" value="2"/>
</dbReference>
<keyword id="KW-0002">3D-structure</keyword>
<keyword id="KW-0067">ATP-binding</keyword>
<keyword id="KW-0173">Coenzyme A biosynthesis</keyword>
<keyword id="KW-0963">Cytoplasm</keyword>
<keyword id="KW-0418">Kinase</keyword>
<keyword id="KW-0479">Metal-binding</keyword>
<keyword id="KW-0547">Nucleotide-binding</keyword>
<keyword id="KW-0630">Potassium</keyword>
<keyword id="KW-1185">Reference proteome</keyword>
<keyword id="KW-0808">Transferase</keyword>
<organism>
    <name type="scientific">Mycobacterium tuberculosis (strain ATCC 25618 / H37Rv)</name>
    <dbReference type="NCBI Taxonomy" id="83332"/>
    <lineage>
        <taxon>Bacteria</taxon>
        <taxon>Bacillati</taxon>
        <taxon>Actinomycetota</taxon>
        <taxon>Actinomycetes</taxon>
        <taxon>Mycobacteriales</taxon>
        <taxon>Mycobacteriaceae</taxon>
        <taxon>Mycobacterium</taxon>
        <taxon>Mycobacterium tuberculosis complex</taxon>
    </lineage>
</organism>
<accession>P9WPA1</accession>
<accession>L0TD10</accession>
<accession>O06282</accession>
<accession>Q7D576</accession>
<proteinExistence type="evidence at protein level"/>
<gene>
    <name evidence="1" type="primary">coaX</name>
    <name type="ordered locus">Rv3600c</name>
</gene>